<keyword id="KW-0325">Glycoprotein</keyword>
<keyword id="KW-0654">Proteoglycan</keyword>
<keyword id="KW-1185">Reference proteome</keyword>
<keyword id="KW-0677">Repeat</keyword>
<keyword id="KW-0964">Secreted</keyword>
<keyword id="KW-0732">Signal</keyword>
<accession>Q9FL53</accession>
<proteinExistence type="evidence at transcript level"/>
<name>FLA21_ARATH</name>
<gene>
    <name type="primary">FLA21</name>
    <name type="ordered locus">At5g06920</name>
    <name type="ORF">MOJ9.9</name>
</gene>
<dbReference type="EMBL" id="AB010697">
    <property type="protein sequence ID" value="BAB11150.1"/>
    <property type="molecule type" value="Genomic_DNA"/>
</dbReference>
<dbReference type="EMBL" id="CP002688">
    <property type="protein sequence ID" value="AED91082.1"/>
    <property type="molecule type" value="Genomic_DNA"/>
</dbReference>
<dbReference type="RefSeq" id="NP_196309.1">
    <property type="nucleotide sequence ID" value="NM_120774.1"/>
</dbReference>
<dbReference type="SMR" id="Q9FL53"/>
<dbReference type="FunCoup" id="Q9FL53">
    <property type="interactions" value="10"/>
</dbReference>
<dbReference type="STRING" id="3702.Q9FL53"/>
<dbReference type="GlyCosmos" id="Q9FL53">
    <property type="glycosylation" value="6 sites, No reported glycans"/>
</dbReference>
<dbReference type="GlyGen" id="Q9FL53">
    <property type="glycosylation" value="6 sites"/>
</dbReference>
<dbReference type="PaxDb" id="3702-AT5G06920.1"/>
<dbReference type="EnsemblPlants" id="AT5G06920.1">
    <property type="protein sequence ID" value="AT5G06920.1"/>
    <property type="gene ID" value="AT5G06920"/>
</dbReference>
<dbReference type="GeneID" id="830583"/>
<dbReference type="Gramene" id="AT5G06920.1">
    <property type="protein sequence ID" value="AT5G06920.1"/>
    <property type="gene ID" value="AT5G06920"/>
</dbReference>
<dbReference type="KEGG" id="ath:AT5G06920"/>
<dbReference type="Araport" id="AT5G06920"/>
<dbReference type="TAIR" id="AT5G06920">
    <property type="gene designation" value="FLA21"/>
</dbReference>
<dbReference type="eggNOG" id="ENOG502QSMZ">
    <property type="taxonomic scope" value="Eukaryota"/>
</dbReference>
<dbReference type="HOGENOM" id="CLU_730378_0_0_1"/>
<dbReference type="InParanoid" id="Q9FL53"/>
<dbReference type="OMA" id="TSHPLWF"/>
<dbReference type="OrthoDB" id="1525874at2759"/>
<dbReference type="PhylomeDB" id="Q9FL53"/>
<dbReference type="PRO" id="PR:Q9FL53"/>
<dbReference type="Proteomes" id="UP000006548">
    <property type="component" value="Chromosome 5"/>
</dbReference>
<dbReference type="ExpressionAtlas" id="Q9FL53">
    <property type="expression patterns" value="baseline and differential"/>
</dbReference>
<dbReference type="GO" id="GO:0005576">
    <property type="term" value="C:extracellular region"/>
    <property type="evidence" value="ECO:0007669"/>
    <property type="project" value="UniProtKB-SubCell"/>
</dbReference>
<dbReference type="Gene3D" id="2.30.180.10">
    <property type="entry name" value="FAS1 domain"/>
    <property type="match status" value="2"/>
</dbReference>
<dbReference type="InterPro" id="IPR036378">
    <property type="entry name" value="FAS1_dom_sf"/>
</dbReference>
<dbReference type="InterPro" id="IPR000782">
    <property type="entry name" value="FAS1_domain"/>
</dbReference>
<dbReference type="InterPro" id="IPR052806">
    <property type="entry name" value="Fasciclin-like_AGP"/>
</dbReference>
<dbReference type="PANTHER" id="PTHR33985:SF19">
    <property type="entry name" value="FASCICLIN-LIKE ARABINOGALACTAN PROTEIN 21"/>
    <property type="match status" value="1"/>
</dbReference>
<dbReference type="PANTHER" id="PTHR33985">
    <property type="entry name" value="OS02G0491300 PROTEIN-RELATED"/>
    <property type="match status" value="1"/>
</dbReference>
<dbReference type="Pfam" id="PF02469">
    <property type="entry name" value="Fasciclin"/>
    <property type="match status" value="2"/>
</dbReference>
<dbReference type="SMART" id="SM00554">
    <property type="entry name" value="FAS1"/>
    <property type="match status" value="2"/>
</dbReference>
<dbReference type="SUPFAM" id="SSF82153">
    <property type="entry name" value="FAS1 domain"/>
    <property type="match status" value="2"/>
</dbReference>
<evidence type="ECO:0000255" key="1"/>
<evidence type="ECO:0000305" key="2"/>
<comment type="function">
    <text>May be a cell surface adhesion protein.</text>
</comment>
<comment type="subcellular location">
    <subcellularLocation>
        <location evidence="2">Secreted</location>
    </subcellularLocation>
</comment>
<comment type="similarity">
    <text evidence="2">Belongs to the fasciclin-like AGP family.</text>
</comment>
<protein>
    <recommendedName>
        <fullName>Fasciclin-like arabinogalactan protein 21</fullName>
    </recommendedName>
</protein>
<organism>
    <name type="scientific">Arabidopsis thaliana</name>
    <name type="common">Mouse-ear cress</name>
    <dbReference type="NCBI Taxonomy" id="3702"/>
    <lineage>
        <taxon>Eukaryota</taxon>
        <taxon>Viridiplantae</taxon>
        <taxon>Streptophyta</taxon>
        <taxon>Embryophyta</taxon>
        <taxon>Tracheophyta</taxon>
        <taxon>Spermatophyta</taxon>
        <taxon>Magnoliopsida</taxon>
        <taxon>eudicotyledons</taxon>
        <taxon>Gunneridae</taxon>
        <taxon>Pentapetalae</taxon>
        <taxon>rosids</taxon>
        <taxon>malvids</taxon>
        <taxon>Brassicales</taxon>
        <taxon>Brassicaceae</taxon>
        <taxon>Camelineae</taxon>
        <taxon>Arabidopsis</taxon>
    </lineage>
</organism>
<sequence length="353" mass="38899">MGCCSSDCFVYFILSIALAFMAISTTLRSPPDSEPTIPIAFSSSSPSLSLNASNTLRQSNFKAIATLLHISPEIFLSSSPNTTLFAIEDASFFNTSSLHPLFLKQLLHYHTLPLMLSMDDLLKKPQGTCLPTLLHHKSVQISTVNQESRTAEVNHVRITHPDMFLGDSLVIHGVIGPFSPLQPHSDHLIHTPLCQSDTTNKTSNNEEVPVSIDWTRIVQLLSSNGFVPFAIGLHSVLNRIVNDHNHHKNLTGVTILATPNLVSLSSASPFLYEVVRHHILVQRLTYKDFASMSDKATVKTLDPYQDLTITRRNVNSSGGDFMISGVEIVDPDMFSSSNFVIHGISHTLEIPHV</sequence>
<reference key="1">
    <citation type="journal article" date="1998" name="DNA Res.">
        <title>Structural analysis of Arabidopsis thaliana chromosome 5. V. Sequence features of the regions of 1,381,565 bp covered by twenty one physically assigned P1 and TAC clones.</title>
        <authorList>
            <person name="Kaneko T."/>
            <person name="Kotani H."/>
            <person name="Nakamura Y."/>
            <person name="Sato S."/>
            <person name="Asamizu E."/>
            <person name="Miyajima N."/>
            <person name="Tabata S."/>
        </authorList>
    </citation>
    <scope>NUCLEOTIDE SEQUENCE [LARGE SCALE GENOMIC DNA]</scope>
    <source>
        <strain>cv. Columbia</strain>
    </source>
</reference>
<reference key="2">
    <citation type="journal article" date="2017" name="Plant J.">
        <title>Araport11: a complete reannotation of the Arabidopsis thaliana reference genome.</title>
        <authorList>
            <person name="Cheng C.Y."/>
            <person name="Krishnakumar V."/>
            <person name="Chan A.P."/>
            <person name="Thibaud-Nissen F."/>
            <person name="Schobel S."/>
            <person name="Town C.D."/>
        </authorList>
    </citation>
    <scope>GENOME REANNOTATION</scope>
    <source>
        <strain>cv. Columbia</strain>
    </source>
</reference>
<reference key="3">
    <citation type="journal article" date="2003" name="Plant Physiol.">
        <title>The fasciclin-like arabinogalactan proteins of Arabidopsis. A multigene family of putative cell adhesion molecules.</title>
        <authorList>
            <person name="Johnson K.L."/>
            <person name="Jones B.J."/>
            <person name="Bacic A."/>
            <person name="Schultz C.J."/>
        </authorList>
    </citation>
    <scope>GENE FAMILY ORGANIZATION</scope>
    <scope>NOMENCLATURE</scope>
</reference>
<feature type="signal peptide" evidence="1">
    <location>
        <begin position="1"/>
        <end position="28"/>
    </location>
</feature>
<feature type="chain" id="PRO_0000253881" description="Fasciclin-like arabinogalactan protein 21">
    <location>
        <begin position="29"/>
        <end position="353"/>
    </location>
</feature>
<feature type="domain" description="FAS1 1">
    <location>
        <begin position="83"/>
        <end position="181"/>
    </location>
</feature>
<feature type="domain" description="FAS1 2">
    <location>
        <begin position="254"/>
        <end position="352"/>
    </location>
</feature>
<feature type="glycosylation site" description="N-linked (GlcNAc...) asparagine" evidence="1">
    <location>
        <position position="51"/>
    </location>
</feature>
<feature type="glycosylation site" description="N-linked (GlcNAc...) asparagine" evidence="1">
    <location>
        <position position="81"/>
    </location>
</feature>
<feature type="glycosylation site" description="N-linked (GlcNAc...) asparagine" evidence="1">
    <location>
        <position position="94"/>
    </location>
</feature>
<feature type="glycosylation site" description="N-linked (GlcNAc...) asparagine" evidence="1">
    <location>
        <position position="200"/>
    </location>
</feature>
<feature type="glycosylation site" description="N-linked (GlcNAc...) asparagine" evidence="1">
    <location>
        <position position="249"/>
    </location>
</feature>
<feature type="glycosylation site" description="N-linked (GlcNAc...) asparagine" evidence="1">
    <location>
        <position position="315"/>
    </location>
</feature>